<name>GULDH_MYCTO</name>
<evidence type="ECO:0000250" key="1"/>
<evidence type="ECO:0000255" key="2">
    <source>
        <dbReference type="PROSITE-ProRule" id="PRU00718"/>
    </source>
</evidence>
<evidence type="ECO:0000305" key="3"/>
<organism>
    <name type="scientific">Mycobacterium tuberculosis (strain CDC 1551 / Oshkosh)</name>
    <dbReference type="NCBI Taxonomy" id="83331"/>
    <lineage>
        <taxon>Bacteria</taxon>
        <taxon>Bacillati</taxon>
        <taxon>Actinomycetota</taxon>
        <taxon>Actinomycetes</taxon>
        <taxon>Mycobacteriales</taxon>
        <taxon>Mycobacteriaceae</taxon>
        <taxon>Mycobacterium</taxon>
        <taxon>Mycobacterium tuberculosis complex</taxon>
    </lineage>
</organism>
<dbReference type="EC" id="1.1.2.-"/>
<dbReference type="EMBL" id="AE000516">
    <property type="protein sequence ID" value="AAK46090.1"/>
    <property type="molecule type" value="Genomic_DNA"/>
</dbReference>
<dbReference type="PIR" id="D70989">
    <property type="entry name" value="D70989"/>
</dbReference>
<dbReference type="RefSeq" id="WP_003408749.1">
    <property type="nucleotide sequence ID" value="NZ_KK341227.1"/>
</dbReference>
<dbReference type="SMR" id="P9WIT2"/>
<dbReference type="KEGG" id="mtc:MT1821"/>
<dbReference type="PATRIC" id="fig|83331.31.peg.1960"/>
<dbReference type="HOGENOM" id="CLU_003896_4_3_11"/>
<dbReference type="UniPathway" id="UPA00132"/>
<dbReference type="Proteomes" id="UP000001020">
    <property type="component" value="Chromosome"/>
</dbReference>
<dbReference type="GO" id="GO:0016020">
    <property type="term" value="C:membrane"/>
    <property type="evidence" value="ECO:0007669"/>
    <property type="project" value="InterPro"/>
</dbReference>
<dbReference type="GO" id="GO:0003885">
    <property type="term" value="F:D-arabinono-1,4-lactone oxidase activity"/>
    <property type="evidence" value="ECO:0007669"/>
    <property type="project" value="InterPro"/>
</dbReference>
<dbReference type="GO" id="GO:0071949">
    <property type="term" value="F:FAD binding"/>
    <property type="evidence" value="ECO:0007669"/>
    <property type="project" value="InterPro"/>
</dbReference>
<dbReference type="GO" id="GO:0080049">
    <property type="term" value="F:L-gulono-1,4-lactone dehydrogenase activity"/>
    <property type="evidence" value="ECO:0007669"/>
    <property type="project" value="TreeGrafter"/>
</dbReference>
<dbReference type="GO" id="GO:0019853">
    <property type="term" value="P:L-ascorbic acid biosynthetic process"/>
    <property type="evidence" value="ECO:0007669"/>
    <property type="project" value="UniProtKB-UniPathway"/>
</dbReference>
<dbReference type="Gene3D" id="3.30.465.10">
    <property type="match status" value="1"/>
</dbReference>
<dbReference type="Gene3D" id="3.30.70.2520">
    <property type="match status" value="1"/>
</dbReference>
<dbReference type="Gene3D" id="3.30.43.10">
    <property type="entry name" value="Uridine Diphospho-n-acetylenolpyruvylglucosamine Reductase, domain 2"/>
    <property type="match status" value="1"/>
</dbReference>
<dbReference type="Gene3D" id="1.10.45.10">
    <property type="entry name" value="Vanillyl-alcohol Oxidase, Chain A, domain 4"/>
    <property type="match status" value="1"/>
</dbReference>
<dbReference type="InterPro" id="IPR007173">
    <property type="entry name" value="ALO_C"/>
</dbReference>
<dbReference type="InterPro" id="IPR016166">
    <property type="entry name" value="FAD-bd_PCMH"/>
</dbReference>
<dbReference type="InterPro" id="IPR036318">
    <property type="entry name" value="FAD-bd_PCMH-like_sf"/>
</dbReference>
<dbReference type="InterPro" id="IPR016167">
    <property type="entry name" value="FAD-bd_PCMH_sub1"/>
</dbReference>
<dbReference type="InterPro" id="IPR016169">
    <property type="entry name" value="FAD-bd_PCMH_sub2"/>
</dbReference>
<dbReference type="InterPro" id="IPR010031">
    <property type="entry name" value="FAD_lactone_oxidase-like"/>
</dbReference>
<dbReference type="InterPro" id="IPR006094">
    <property type="entry name" value="Oxid_FAD_bind_N"/>
</dbReference>
<dbReference type="InterPro" id="IPR006093">
    <property type="entry name" value="Oxy_OxRdtase_FAD_BS"/>
</dbReference>
<dbReference type="InterPro" id="IPR016171">
    <property type="entry name" value="Vanillyl_alc_oxidase_C-sub2"/>
</dbReference>
<dbReference type="NCBIfam" id="TIGR01679">
    <property type="entry name" value="bact_FAD_ox"/>
    <property type="match status" value="1"/>
</dbReference>
<dbReference type="PANTHER" id="PTHR43762:SF1">
    <property type="entry name" value="D-ARABINONO-1,4-LACTONE OXIDASE"/>
    <property type="match status" value="1"/>
</dbReference>
<dbReference type="PANTHER" id="PTHR43762">
    <property type="entry name" value="L-GULONOLACTONE OXIDASE"/>
    <property type="match status" value="1"/>
</dbReference>
<dbReference type="Pfam" id="PF04030">
    <property type="entry name" value="ALO"/>
    <property type="match status" value="1"/>
</dbReference>
<dbReference type="Pfam" id="PF01565">
    <property type="entry name" value="FAD_binding_4"/>
    <property type="match status" value="1"/>
</dbReference>
<dbReference type="PIRSF" id="PIRSF000136">
    <property type="entry name" value="LGO_GLO"/>
    <property type="match status" value="1"/>
</dbReference>
<dbReference type="SUPFAM" id="SSF56176">
    <property type="entry name" value="FAD-binding/transporter-associated domain-like"/>
    <property type="match status" value="1"/>
</dbReference>
<dbReference type="PROSITE" id="PS51387">
    <property type="entry name" value="FAD_PCMH"/>
    <property type="match status" value="1"/>
</dbReference>
<dbReference type="PROSITE" id="PS00862">
    <property type="entry name" value="OX2_COVAL_FAD"/>
    <property type="match status" value="1"/>
</dbReference>
<protein>
    <recommendedName>
        <fullName>L-gulono-1,4-lactone dehydrogenase</fullName>
        <ecNumber>1.1.2.-</ecNumber>
    </recommendedName>
</protein>
<reference key="1">
    <citation type="journal article" date="2002" name="J. Bacteriol.">
        <title>Whole-genome comparison of Mycobacterium tuberculosis clinical and laboratory strains.</title>
        <authorList>
            <person name="Fleischmann R.D."/>
            <person name="Alland D."/>
            <person name="Eisen J.A."/>
            <person name="Carpenter L."/>
            <person name="White O."/>
            <person name="Peterson J.D."/>
            <person name="DeBoy R.T."/>
            <person name="Dodson R.J."/>
            <person name="Gwinn M.L."/>
            <person name="Haft D.H."/>
            <person name="Hickey E.K."/>
            <person name="Kolonay J.F."/>
            <person name="Nelson W.C."/>
            <person name="Umayam L.A."/>
            <person name="Ermolaeva M.D."/>
            <person name="Salzberg S.L."/>
            <person name="Delcher A."/>
            <person name="Utterback T.R."/>
            <person name="Weidman J.F."/>
            <person name="Khouri H.M."/>
            <person name="Gill J."/>
            <person name="Mikula A."/>
            <person name="Bishai W."/>
            <person name="Jacobs W.R. Jr."/>
            <person name="Venter J.C."/>
            <person name="Fraser C.M."/>
        </authorList>
    </citation>
    <scope>NUCLEOTIDE SEQUENCE [LARGE SCALE GENOMIC DNA]</scope>
    <source>
        <strain>CDC 1551 / Oshkosh</strain>
    </source>
</reference>
<accession>P9WIT2</accession>
<accession>F2GJF7</accession>
<accession>L0TAK3</accession>
<accession>O06804</accession>
<accession>Q7D7Z8</accession>
<comment type="function">
    <text evidence="1">Oxidizes L-gulono-1,4-lactone to L-xylo-hexulonolactone which spontaneously isomerizes to L-ascorbate.</text>
</comment>
<comment type="catalytic activity">
    <reaction>
        <text>L-gulono-1,4-lactone + 2 Fe(III)-[cytochrome c] = L-ascorbate + 2 Fe(II)-[cytochrome c] + 3 H(+)</text>
        <dbReference type="Rhea" id="RHEA:47248"/>
        <dbReference type="Rhea" id="RHEA-COMP:10350"/>
        <dbReference type="Rhea" id="RHEA-COMP:14399"/>
        <dbReference type="ChEBI" id="CHEBI:15378"/>
        <dbReference type="ChEBI" id="CHEBI:17587"/>
        <dbReference type="ChEBI" id="CHEBI:29033"/>
        <dbReference type="ChEBI" id="CHEBI:29034"/>
        <dbReference type="ChEBI" id="CHEBI:38290"/>
    </reaction>
</comment>
<comment type="cofactor">
    <cofactor evidence="1">
        <name>a divalent metal cation</name>
        <dbReference type="ChEBI" id="CHEBI:60240"/>
    </cofactor>
    <text evidence="1">Divalent metal cation.</text>
</comment>
<comment type="pathway">
    <text>Cofactor biosynthesis; L-ascorbate biosynthesis.</text>
</comment>
<comment type="similarity">
    <text evidence="3">Belongs to the oxygen-dependent FAD-linked oxidoreductase family.</text>
</comment>
<proteinExistence type="inferred from homology"/>
<keyword id="KW-0060">Ascorbate biosynthesis</keyword>
<keyword id="KW-0560">Oxidoreductase</keyword>
<keyword id="KW-1185">Reference proteome</keyword>
<gene>
    <name type="ordered locus">MT1821</name>
</gene>
<feature type="chain" id="PRO_0000427950" description="L-gulono-1,4-lactone dehydrogenase">
    <location>
        <begin position="1"/>
        <end position="428"/>
    </location>
</feature>
<feature type="domain" description="FAD-binding PCMH-type" evidence="2">
    <location>
        <begin position="12"/>
        <end position="179"/>
    </location>
</feature>
<sequence length="428" mass="48045">MSPIWSNWPGEQVCAPSAIVRPTSEAELADVIAQAAKRGERVRAVGSGHSFTDIACTDGVMIDMTGLQRVLDVDQPTGLVTVEGGAKLRALGPQLAQRRLGLENQGDVDPQSITGATATATHGTGVRFQNLSARIVSLRLVTAGGEVLSLSEGDDYLAARVSLGALGVISQVTLQTVPLFTLHRHDQRRSLAQTLERLDEFVDGNDHFEFFVFPYADKALTRTMHRSDEQPKPTPGWQRMVGENFENGGLSLICQTGRRFPSVAPRLNRLMTNMMSSSTVQDRAYKVFATQRKVRFTEMEYAIPRENGREALQRVIDLVRRRSLPIMFPIEVRFSAPDDSFLSTAYGRDTCYIAVHQYAGMEFESYFRAVEEIMDDYAGRPHWGKRHYQTAATLRERYPQWDRFAAVRDRLDPDRVFLNDYTRRVLGP</sequence>